<feature type="chain" id="PRO_1000143662" description="NADH-quinone oxidoreductase subunit I">
    <location>
        <begin position="1"/>
        <end position="182"/>
    </location>
</feature>
<feature type="domain" description="4Fe-4S ferredoxin-type 1" evidence="1">
    <location>
        <begin position="52"/>
        <end position="82"/>
    </location>
</feature>
<feature type="domain" description="4Fe-4S ferredoxin-type 2" evidence="1">
    <location>
        <begin position="92"/>
        <end position="121"/>
    </location>
</feature>
<feature type="binding site" evidence="1">
    <location>
        <position position="62"/>
    </location>
    <ligand>
        <name>[4Fe-4S] cluster</name>
        <dbReference type="ChEBI" id="CHEBI:49883"/>
        <label>1</label>
    </ligand>
</feature>
<feature type="binding site" evidence="1">
    <location>
        <position position="65"/>
    </location>
    <ligand>
        <name>[4Fe-4S] cluster</name>
        <dbReference type="ChEBI" id="CHEBI:49883"/>
        <label>1</label>
    </ligand>
</feature>
<feature type="binding site" evidence="1">
    <location>
        <position position="68"/>
    </location>
    <ligand>
        <name>[4Fe-4S] cluster</name>
        <dbReference type="ChEBI" id="CHEBI:49883"/>
        <label>1</label>
    </ligand>
</feature>
<feature type="binding site" evidence="1">
    <location>
        <position position="72"/>
    </location>
    <ligand>
        <name>[4Fe-4S] cluster</name>
        <dbReference type="ChEBI" id="CHEBI:49883"/>
        <label>2</label>
    </ligand>
</feature>
<feature type="binding site" evidence="1">
    <location>
        <position position="101"/>
    </location>
    <ligand>
        <name>[4Fe-4S] cluster</name>
        <dbReference type="ChEBI" id="CHEBI:49883"/>
        <label>2</label>
    </ligand>
</feature>
<feature type="binding site" evidence="1">
    <location>
        <position position="104"/>
    </location>
    <ligand>
        <name>[4Fe-4S] cluster</name>
        <dbReference type="ChEBI" id="CHEBI:49883"/>
        <label>2</label>
    </ligand>
</feature>
<feature type="binding site" evidence="1">
    <location>
        <position position="107"/>
    </location>
    <ligand>
        <name>[4Fe-4S] cluster</name>
        <dbReference type="ChEBI" id="CHEBI:49883"/>
        <label>2</label>
    </ligand>
</feature>
<feature type="binding site" evidence="1">
    <location>
        <position position="111"/>
    </location>
    <ligand>
        <name>[4Fe-4S] cluster</name>
        <dbReference type="ChEBI" id="CHEBI:49883"/>
        <label>1</label>
    </ligand>
</feature>
<reference key="1">
    <citation type="journal article" date="2009" name="Genome Res.">
        <title>Newly introduced genomic prophage islands are critical determinants of in vivo competitiveness in the Liverpool epidemic strain of Pseudomonas aeruginosa.</title>
        <authorList>
            <person name="Winstanley C."/>
            <person name="Langille M.G.I."/>
            <person name="Fothergill J.L."/>
            <person name="Kukavica-Ibrulj I."/>
            <person name="Paradis-Bleau C."/>
            <person name="Sanschagrin F."/>
            <person name="Thomson N.R."/>
            <person name="Winsor G.L."/>
            <person name="Quail M.A."/>
            <person name="Lennard N."/>
            <person name="Bignell A."/>
            <person name="Clarke L."/>
            <person name="Seeger K."/>
            <person name="Saunders D."/>
            <person name="Harris D."/>
            <person name="Parkhill J."/>
            <person name="Hancock R.E.W."/>
            <person name="Brinkman F.S.L."/>
            <person name="Levesque R.C."/>
        </authorList>
    </citation>
    <scope>NUCLEOTIDE SEQUENCE [LARGE SCALE GENOMIC DNA]</scope>
    <source>
        <strain>LESB58</strain>
    </source>
</reference>
<organism>
    <name type="scientific">Pseudomonas aeruginosa (strain LESB58)</name>
    <dbReference type="NCBI Taxonomy" id="557722"/>
    <lineage>
        <taxon>Bacteria</taxon>
        <taxon>Pseudomonadati</taxon>
        <taxon>Pseudomonadota</taxon>
        <taxon>Gammaproteobacteria</taxon>
        <taxon>Pseudomonadales</taxon>
        <taxon>Pseudomonadaceae</taxon>
        <taxon>Pseudomonas</taxon>
    </lineage>
</organism>
<gene>
    <name evidence="1" type="primary">nuoI</name>
    <name type="ordered locus">PLES_24611</name>
</gene>
<dbReference type="EC" id="7.1.1.-" evidence="1"/>
<dbReference type="EMBL" id="FM209186">
    <property type="protein sequence ID" value="CAW27187.1"/>
    <property type="molecule type" value="Genomic_DNA"/>
</dbReference>
<dbReference type="RefSeq" id="WP_003090467.1">
    <property type="nucleotide sequence ID" value="NC_011770.1"/>
</dbReference>
<dbReference type="SMR" id="B7VAQ8"/>
<dbReference type="GeneID" id="77220819"/>
<dbReference type="KEGG" id="pag:PLES_24611"/>
<dbReference type="HOGENOM" id="CLU_067218_4_3_6"/>
<dbReference type="GO" id="GO:0005886">
    <property type="term" value="C:plasma membrane"/>
    <property type="evidence" value="ECO:0007669"/>
    <property type="project" value="UniProtKB-SubCell"/>
</dbReference>
<dbReference type="GO" id="GO:0051539">
    <property type="term" value="F:4 iron, 4 sulfur cluster binding"/>
    <property type="evidence" value="ECO:0007669"/>
    <property type="project" value="UniProtKB-KW"/>
</dbReference>
<dbReference type="GO" id="GO:0005506">
    <property type="term" value="F:iron ion binding"/>
    <property type="evidence" value="ECO:0007669"/>
    <property type="project" value="UniProtKB-UniRule"/>
</dbReference>
<dbReference type="GO" id="GO:0050136">
    <property type="term" value="F:NADH:ubiquinone reductase (non-electrogenic) activity"/>
    <property type="evidence" value="ECO:0007669"/>
    <property type="project" value="UniProtKB-UniRule"/>
</dbReference>
<dbReference type="GO" id="GO:0048038">
    <property type="term" value="F:quinone binding"/>
    <property type="evidence" value="ECO:0007669"/>
    <property type="project" value="UniProtKB-KW"/>
</dbReference>
<dbReference type="GO" id="GO:0009060">
    <property type="term" value="P:aerobic respiration"/>
    <property type="evidence" value="ECO:0007669"/>
    <property type="project" value="TreeGrafter"/>
</dbReference>
<dbReference type="FunFam" id="3.30.70.3270:FF:000002">
    <property type="entry name" value="NADH-quinone oxidoreductase subunit I"/>
    <property type="match status" value="1"/>
</dbReference>
<dbReference type="Gene3D" id="3.30.70.3270">
    <property type="match status" value="1"/>
</dbReference>
<dbReference type="HAMAP" id="MF_01351">
    <property type="entry name" value="NDH1_NuoI"/>
    <property type="match status" value="1"/>
</dbReference>
<dbReference type="InterPro" id="IPR017896">
    <property type="entry name" value="4Fe4S_Fe-S-bd"/>
</dbReference>
<dbReference type="InterPro" id="IPR017900">
    <property type="entry name" value="4Fe4S_Fe_S_CS"/>
</dbReference>
<dbReference type="InterPro" id="IPR010226">
    <property type="entry name" value="NADH_quinone_OxRdtase_chainI"/>
</dbReference>
<dbReference type="NCBIfam" id="TIGR01971">
    <property type="entry name" value="NuoI"/>
    <property type="match status" value="1"/>
</dbReference>
<dbReference type="NCBIfam" id="NF004536">
    <property type="entry name" value="PRK05888.1-1"/>
    <property type="match status" value="1"/>
</dbReference>
<dbReference type="PANTHER" id="PTHR10849:SF20">
    <property type="entry name" value="NADH DEHYDROGENASE [UBIQUINONE] IRON-SULFUR PROTEIN 8, MITOCHONDRIAL"/>
    <property type="match status" value="1"/>
</dbReference>
<dbReference type="PANTHER" id="PTHR10849">
    <property type="entry name" value="NADH DEHYDROGENASE UBIQUINONE IRON-SULFUR PROTEIN 8, MITOCHONDRIAL"/>
    <property type="match status" value="1"/>
</dbReference>
<dbReference type="Pfam" id="PF12838">
    <property type="entry name" value="Fer4_7"/>
    <property type="match status" value="1"/>
</dbReference>
<dbReference type="SUPFAM" id="SSF54862">
    <property type="entry name" value="4Fe-4S ferredoxins"/>
    <property type="match status" value="1"/>
</dbReference>
<dbReference type="PROSITE" id="PS00198">
    <property type="entry name" value="4FE4S_FER_1"/>
    <property type="match status" value="2"/>
</dbReference>
<dbReference type="PROSITE" id="PS51379">
    <property type="entry name" value="4FE4S_FER_2"/>
    <property type="match status" value="2"/>
</dbReference>
<evidence type="ECO:0000255" key="1">
    <source>
        <dbReference type="HAMAP-Rule" id="MF_01351"/>
    </source>
</evidence>
<comment type="function">
    <text evidence="1">NDH-1 shuttles electrons from NADH, via FMN and iron-sulfur (Fe-S) centers, to quinones in the respiratory chain. The immediate electron acceptor for the enzyme in this species is believed to be ubiquinone. Couples the redox reaction to proton translocation (for every two electrons transferred, four hydrogen ions are translocated across the cytoplasmic membrane), and thus conserves the redox energy in a proton gradient.</text>
</comment>
<comment type="catalytic activity">
    <reaction evidence="1">
        <text>a quinone + NADH + 5 H(+)(in) = a quinol + NAD(+) + 4 H(+)(out)</text>
        <dbReference type="Rhea" id="RHEA:57888"/>
        <dbReference type="ChEBI" id="CHEBI:15378"/>
        <dbReference type="ChEBI" id="CHEBI:24646"/>
        <dbReference type="ChEBI" id="CHEBI:57540"/>
        <dbReference type="ChEBI" id="CHEBI:57945"/>
        <dbReference type="ChEBI" id="CHEBI:132124"/>
    </reaction>
</comment>
<comment type="cofactor">
    <cofactor evidence="1">
        <name>[4Fe-4S] cluster</name>
        <dbReference type="ChEBI" id="CHEBI:49883"/>
    </cofactor>
    <text evidence="1">Binds 2 [4Fe-4S] clusters per subunit.</text>
</comment>
<comment type="subunit">
    <text evidence="1">NDH-1 is composed of 13 different subunits. Subunits NuoA, H, J, K, L, M, N constitute the membrane sector of the complex.</text>
</comment>
<comment type="subcellular location">
    <subcellularLocation>
        <location evidence="1">Cell inner membrane</location>
        <topology evidence="1">Peripheral membrane protein</topology>
    </subcellularLocation>
</comment>
<comment type="similarity">
    <text evidence="1">Belongs to the complex I 23 kDa subunit family.</text>
</comment>
<name>NUOI_PSEA8</name>
<keyword id="KW-0004">4Fe-4S</keyword>
<keyword id="KW-0997">Cell inner membrane</keyword>
<keyword id="KW-1003">Cell membrane</keyword>
<keyword id="KW-0408">Iron</keyword>
<keyword id="KW-0411">Iron-sulfur</keyword>
<keyword id="KW-0472">Membrane</keyword>
<keyword id="KW-0479">Metal-binding</keyword>
<keyword id="KW-0520">NAD</keyword>
<keyword id="KW-0874">Quinone</keyword>
<keyword id="KW-0677">Repeat</keyword>
<keyword id="KW-1278">Translocase</keyword>
<keyword id="KW-0830">Ubiquinone</keyword>
<sequence length="182" mass="20610">MIKEIINVVHGTFTQLRSLVMIFGHAFRKRDTLQYPEEPVYLPPRYRGRIVLTRDPDGEERCVACNLCAVACPVGCISLQKAETEDGRWYPEFFRINFSRCIFCGLCEEACPTTAIQLTPDFEMGEFKRQDLVYEKHDLLISGPGKNPDYNYYRVAGMAIAGKPKGAAQNEAEPINVKSLLP</sequence>
<accession>B7VAQ8</accession>
<proteinExistence type="inferred from homology"/>
<protein>
    <recommendedName>
        <fullName evidence="1">NADH-quinone oxidoreductase subunit I</fullName>
        <ecNumber evidence="1">7.1.1.-</ecNumber>
    </recommendedName>
    <alternativeName>
        <fullName evidence="1">NADH dehydrogenase I subunit I</fullName>
    </alternativeName>
    <alternativeName>
        <fullName evidence="1">NDH-1 subunit I</fullName>
    </alternativeName>
</protein>